<keyword id="KW-1003">Cell membrane</keyword>
<keyword id="KW-0963">Cytoplasm</keyword>
<keyword id="KW-0342">GTP-binding</keyword>
<keyword id="KW-0472">Membrane</keyword>
<keyword id="KW-0547">Nucleotide-binding</keyword>
<keyword id="KW-0690">Ribosome biogenesis</keyword>
<keyword id="KW-0694">RNA-binding</keyword>
<keyword id="KW-0699">rRNA-binding</keyword>
<protein>
    <recommendedName>
        <fullName evidence="1">GTPase Era</fullName>
    </recommendedName>
</protein>
<dbReference type="EMBL" id="AE015929">
    <property type="protein sequence ID" value="AAO04853.1"/>
    <property type="molecule type" value="Genomic_DNA"/>
</dbReference>
<dbReference type="RefSeq" id="NP_764809.1">
    <property type="nucleotide sequence ID" value="NC_004461.1"/>
</dbReference>
<dbReference type="RefSeq" id="WP_001831081.1">
    <property type="nucleotide sequence ID" value="NZ_WBME01000008.1"/>
</dbReference>
<dbReference type="SMR" id="Q8CP21"/>
<dbReference type="GeneID" id="50018630"/>
<dbReference type="KEGG" id="sep:SE_1254"/>
<dbReference type="PATRIC" id="fig|176280.10.peg.1222"/>
<dbReference type="eggNOG" id="COG1159">
    <property type="taxonomic scope" value="Bacteria"/>
</dbReference>
<dbReference type="HOGENOM" id="CLU_038009_1_0_9"/>
<dbReference type="OrthoDB" id="9805918at2"/>
<dbReference type="Proteomes" id="UP000001411">
    <property type="component" value="Chromosome"/>
</dbReference>
<dbReference type="GO" id="GO:0005829">
    <property type="term" value="C:cytosol"/>
    <property type="evidence" value="ECO:0007669"/>
    <property type="project" value="TreeGrafter"/>
</dbReference>
<dbReference type="GO" id="GO:0005886">
    <property type="term" value="C:plasma membrane"/>
    <property type="evidence" value="ECO:0007669"/>
    <property type="project" value="UniProtKB-SubCell"/>
</dbReference>
<dbReference type="GO" id="GO:0005525">
    <property type="term" value="F:GTP binding"/>
    <property type="evidence" value="ECO:0007669"/>
    <property type="project" value="UniProtKB-UniRule"/>
</dbReference>
<dbReference type="GO" id="GO:0003924">
    <property type="term" value="F:GTPase activity"/>
    <property type="evidence" value="ECO:0007669"/>
    <property type="project" value="UniProtKB-UniRule"/>
</dbReference>
<dbReference type="GO" id="GO:0043024">
    <property type="term" value="F:ribosomal small subunit binding"/>
    <property type="evidence" value="ECO:0007669"/>
    <property type="project" value="TreeGrafter"/>
</dbReference>
<dbReference type="GO" id="GO:0070181">
    <property type="term" value="F:small ribosomal subunit rRNA binding"/>
    <property type="evidence" value="ECO:0007669"/>
    <property type="project" value="UniProtKB-UniRule"/>
</dbReference>
<dbReference type="GO" id="GO:0000028">
    <property type="term" value="P:ribosomal small subunit assembly"/>
    <property type="evidence" value="ECO:0007669"/>
    <property type="project" value="TreeGrafter"/>
</dbReference>
<dbReference type="CDD" id="cd04163">
    <property type="entry name" value="Era"/>
    <property type="match status" value="1"/>
</dbReference>
<dbReference type="CDD" id="cd22534">
    <property type="entry name" value="KH-II_Era"/>
    <property type="match status" value="1"/>
</dbReference>
<dbReference type="FunFam" id="3.30.300.20:FF:000003">
    <property type="entry name" value="GTPase Era"/>
    <property type="match status" value="1"/>
</dbReference>
<dbReference type="FunFam" id="3.40.50.300:FF:000094">
    <property type="entry name" value="GTPase Era"/>
    <property type="match status" value="1"/>
</dbReference>
<dbReference type="Gene3D" id="3.30.300.20">
    <property type="match status" value="1"/>
</dbReference>
<dbReference type="Gene3D" id="3.40.50.300">
    <property type="entry name" value="P-loop containing nucleotide triphosphate hydrolases"/>
    <property type="match status" value="1"/>
</dbReference>
<dbReference type="HAMAP" id="MF_00367">
    <property type="entry name" value="GTPase_Era"/>
    <property type="match status" value="1"/>
</dbReference>
<dbReference type="InterPro" id="IPR030388">
    <property type="entry name" value="G_ERA_dom"/>
</dbReference>
<dbReference type="InterPro" id="IPR006073">
    <property type="entry name" value="GTP-bd"/>
</dbReference>
<dbReference type="InterPro" id="IPR005662">
    <property type="entry name" value="GTPase_Era-like"/>
</dbReference>
<dbReference type="InterPro" id="IPR015946">
    <property type="entry name" value="KH_dom-like_a/b"/>
</dbReference>
<dbReference type="InterPro" id="IPR004044">
    <property type="entry name" value="KH_dom_type_2"/>
</dbReference>
<dbReference type="InterPro" id="IPR009019">
    <property type="entry name" value="KH_sf_prok-type"/>
</dbReference>
<dbReference type="InterPro" id="IPR027417">
    <property type="entry name" value="P-loop_NTPase"/>
</dbReference>
<dbReference type="InterPro" id="IPR005225">
    <property type="entry name" value="Small_GTP-bd"/>
</dbReference>
<dbReference type="NCBIfam" id="TIGR00436">
    <property type="entry name" value="era"/>
    <property type="match status" value="1"/>
</dbReference>
<dbReference type="NCBIfam" id="NF000908">
    <property type="entry name" value="PRK00089.1"/>
    <property type="match status" value="1"/>
</dbReference>
<dbReference type="NCBIfam" id="TIGR00231">
    <property type="entry name" value="small_GTP"/>
    <property type="match status" value="1"/>
</dbReference>
<dbReference type="PANTHER" id="PTHR42698">
    <property type="entry name" value="GTPASE ERA"/>
    <property type="match status" value="1"/>
</dbReference>
<dbReference type="PANTHER" id="PTHR42698:SF1">
    <property type="entry name" value="GTPASE ERA, MITOCHONDRIAL"/>
    <property type="match status" value="1"/>
</dbReference>
<dbReference type="Pfam" id="PF07650">
    <property type="entry name" value="KH_2"/>
    <property type="match status" value="1"/>
</dbReference>
<dbReference type="Pfam" id="PF01926">
    <property type="entry name" value="MMR_HSR1"/>
    <property type="match status" value="1"/>
</dbReference>
<dbReference type="SUPFAM" id="SSF52540">
    <property type="entry name" value="P-loop containing nucleoside triphosphate hydrolases"/>
    <property type="match status" value="1"/>
</dbReference>
<dbReference type="SUPFAM" id="SSF54814">
    <property type="entry name" value="Prokaryotic type KH domain (KH-domain type II)"/>
    <property type="match status" value="1"/>
</dbReference>
<dbReference type="PROSITE" id="PS51713">
    <property type="entry name" value="G_ERA"/>
    <property type="match status" value="1"/>
</dbReference>
<dbReference type="PROSITE" id="PS50823">
    <property type="entry name" value="KH_TYPE_2"/>
    <property type="match status" value="1"/>
</dbReference>
<gene>
    <name evidence="1" type="primary">era</name>
    <name type="ordered locus">SE_1254</name>
</gene>
<accession>Q8CP21</accession>
<comment type="function">
    <text evidence="1">An essential GTPase that binds both GDP and GTP, with rapid nucleotide exchange. Plays a role in 16S rRNA processing and 30S ribosomal subunit biogenesis and possibly also in cell cycle regulation and energy metabolism.</text>
</comment>
<comment type="subunit">
    <text evidence="1">Monomer.</text>
</comment>
<comment type="subcellular location">
    <subcellularLocation>
        <location>Cytoplasm</location>
    </subcellularLocation>
    <subcellularLocation>
        <location evidence="1">Cell membrane</location>
        <topology evidence="1">Peripheral membrane protein</topology>
    </subcellularLocation>
</comment>
<comment type="similarity">
    <text evidence="1 2">Belongs to the TRAFAC class TrmE-Era-EngA-EngB-Septin-like GTPase superfamily. Era GTPase family.</text>
</comment>
<organism>
    <name type="scientific">Staphylococcus epidermidis (strain ATCC 12228 / FDA PCI 1200)</name>
    <dbReference type="NCBI Taxonomy" id="176280"/>
    <lineage>
        <taxon>Bacteria</taxon>
        <taxon>Bacillati</taxon>
        <taxon>Bacillota</taxon>
        <taxon>Bacilli</taxon>
        <taxon>Bacillales</taxon>
        <taxon>Staphylococcaceae</taxon>
        <taxon>Staphylococcus</taxon>
    </lineage>
</organism>
<evidence type="ECO:0000255" key="1">
    <source>
        <dbReference type="HAMAP-Rule" id="MF_00367"/>
    </source>
</evidence>
<evidence type="ECO:0000255" key="2">
    <source>
        <dbReference type="PROSITE-ProRule" id="PRU01050"/>
    </source>
</evidence>
<sequence length="299" mass="34434">MTEHKSGFVSIIGRPNVGKSTFVNRVIGHKIAIMSDKAQTTRNKIQGVMTRDDAQIIFIDTPGIHKPKHKLGDYMMRVAKNTLSEIDAIMFMVNVNEDIGRGDEYIMEMLKNVKTPIFLVLNKIDLVHPDTLMPKIEQYQSYMDFTDIIPISALEGLNVDHFIDVLKSFLPEGPKYYPDNQISDHPEQFVVSEIIREKILHLTSEEIPHAIGVNVDRMIKEDEDRVRIEATIYVERDSQKGIVIGKGGKKLKEVGKRARRDIEMLLGSKVYLELWVKVQRDWRNKVNFIRQIGYVEDQD</sequence>
<reference key="1">
    <citation type="journal article" date="2003" name="Mol. Microbiol.">
        <title>Genome-based analysis of virulence genes in a non-biofilm-forming Staphylococcus epidermidis strain (ATCC 12228).</title>
        <authorList>
            <person name="Zhang Y.-Q."/>
            <person name="Ren S.-X."/>
            <person name="Li H.-L."/>
            <person name="Wang Y.-X."/>
            <person name="Fu G."/>
            <person name="Yang J."/>
            <person name="Qin Z.-Q."/>
            <person name="Miao Y.-G."/>
            <person name="Wang W.-Y."/>
            <person name="Chen R.-S."/>
            <person name="Shen Y."/>
            <person name="Chen Z."/>
            <person name="Yuan Z.-H."/>
            <person name="Zhao G.-P."/>
            <person name="Qu D."/>
            <person name="Danchin A."/>
            <person name="Wen Y.-M."/>
        </authorList>
    </citation>
    <scope>NUCLEOTIDE SEQUENCE [LARGE SCALE GENOMIC DNA]</scope>
    <source>
        <strain>ATCC 12228 / FDA PCI 1200</strain>
    </source>
</reference>
<feature type="chain" id="PRO_0000180052" description="GTPase Era">
    <location>
        <begin position="1"/>
        <end position="299"/>
    </location>
</feature>
<feature type="domain" description="Era-type G" evidence="2">
    <location>
        <begin position="5"/>
        <end position="172"/>
    </location>
</feature>
<feature type="domain" description="KH type-2" evidence="1">
    <location>
        <begin position="203"/>
        <end position="280"/>
    </location>
</feature>
<feature type="region of interest" description="G1" evidence="2">
    <location>
        <begin position="13"/>
        <end position="20"/>
    </location>
</feature>
<feature type="region of interest" description="G2" evidence="2">
    <location>
        <begin position="39"/>
        <end position="43"/>
    </location>
</feature>
<feature type="region of interest" description="G3" evidence="2">
    <location>
        <begin position="60"/>
        <end position="63"/>
    </location>
</feature>
<feature type="region of interest" description="G4" evidence="2">
    <location>
        <begin position="122"/>
        <end position="125"/>
    </location>
</feature>
<feature type="region of interest" description="G5" evidence="2">
    <location>
        <begin position="151"/>
        <end position="153"/>
    </location>
</feature>
<feature type="binding site" evidence="1">
    <location>
        <begin position="13"/>
        <end position="20"/>
    </location>
    <ligand>
        <name>GTP</name>
        <dbReference type="ChEBI" id="CHEBI:37565"/>
    </ligand>
</feature>
<feature type="binding site" evidence="1">
    <location>
        <begin position="60"/>
        <end position="64"/>
    </location>
    <ligand>
        <name>GTP</name>
        <dbReference type="ChEBI" id="CHEBI:37565"/>
    </ligand>
</feature>
<feature type="binding site" evidence="1">
    <location>
        <begin position="122"/>
        <end position="125"/>
    </location>
    <ligand>
        <name>GTP</name>
        <dbReference type="ChEBI" id="CHEBI:37565"/>
    </ligand>
</feature>
<proteinExistence type="inferred from homology"/>
<name>ERA_STAES</name>